<dbReference type="EMBL" id="AE005174">
    <property type="protein sequence ID" value="AAG57643.1"/>
    <property type="molecule type" value="Genomic_DNA"/>
</dbReference>
<dbReference type="EMBL" id="BA000007">
    <property type="protein sequence ID" value="BAB36818.1"/>
    <property type="molecule type" value="Genomic_DNA"/>
</dbReference>
<dbReference type="PIR" id="C91053">
    <property type="entry name" value="C91053"/>
</dbReference>
<dbReference type="PIR" id="G85897">
    <property type="entry name" value="G85897"/>
</dbReference>
<dbReference type="RefSeq" id="NP_311422.1">
    <property type="nucleotide sequence ID" value="NC_002695.1"/>
</dbReference>
<dbReference type="RefSeq" id="WP_000331707.1">
    <property type="nucleotide sequence ID" value="NZ_VOAI01000001.1"/>
</dbReference>
<dbReference type="PDB" id="3LVL">
    <property type="method" value="X-ray"/>
    <property type="resolution" value="3.00 A"/>
    <property type="chains" value="A=2-128"/>
</dbReference>
<dbReference type="PDBsum" id="3LVL"/>
<dbReference type="BMRB" id="P0ACD6"/>
<dbReference type="SMR" id="P0ACD6"/>
<dbReference type="DIP" id="DIP-58575N"/>
<dbReference type="IntAct" id="P0ACD6">
    <property type="interactions" value="3"/>
</dbReference>
<dbReference type="STRING" id="155864.Z3796"/>
<dbReference type="GeneID" id="915163"/>
<dbReference type="GeneID" id="93774607"/>
<dbReference type="KEGG" id="ece:Z3796"/>
<dbReference type="KEGG" id="ecs:ECs_3395"/>
<dbReference type="PATRIC" id="fig|386585.9.peg.3547"/>
<dbReference type="eggNOG" id="COG0822">
    <property type="taxonomic scope" value="Bacteria"/>
</dbReference>
<dbReference type="HOGENOM" id="CLU_079283_5_0_6"/>
<dbReference type="OMA" id="SMVTEMV"/>
<dbReference type="EvolutionaryTrace" id="P0ACD6"/>
<dbReference type="Proteomes" id="UP000000558">
    <property type="component" value="Chromosome"/>
</dbReference>
<dbReference type="Proteomes" id="UP000002519">
    <property type="component" value="Chromosome"/>
</dbReference>
<dbReference type="GO" id="GO:0005737">
    <property type="term" value="C:cytoplasm"/>
    <property type="evidence" value="ECO:0007669"/>
    <property type="project" value="UniProtKB-ARBA"/>
</dbReference>
<dbReference type="GO" id="GO:0005506">
    <property type="term" value="F:iron ion binding"/>
    <property type="evidence" value="ECO:0007669"/>
    <property type="project" value="InterPro"/>
</dbReference>
<dbReference type="GO" id="GO:0051536">
    <property type="term" value="F:iron-sulfur cluster binding"/>
    <property type="evidence" value="ECO:0007669"/>
    <property type="project" value="InterPro"/>
</dbReference>
<dbReference type="GO" id="GO:0016226">
    <property type="term" value="P:iron-sulfur cluster assembly"/>
    <property type="evidence" value="ECO:0007669"/>
    <property type="project" value="InterPro"/>
</dbReference>
<dbReference type="CDD" id="cd06664">
    <property type="entry name" value="IscU_like"/>
    <property type="match status" value="1"/>
</dbReference>
<dbReference type="FunFam" id="3.90.1010.10:FF:000001">
    <property type="entry name" value="Iron-sulfur cluster assembly scaffold protein IscU"/>
    <property type="match status" value="1"/>
</dbReference>
<dbReference type="Gene3D" id="3.90.1010.10">
    <property type="match status" value="1"/>
</dbReference>
<dbReference type="InterPro" id="IPR011339">
    <property type="entry name" value="ISCU"/>
</dbReference>
<dbReference type="InterPro" id="IPR002871">
    <property type="entry name" value="NIF_FeS_clus_asmbl_NifU_N"/>
</dbReference>
<dbReference type="NCBIfam" id="TIGR01999">
    <property type="entry name" value="iscU"/>
    <property type="match status" value="1"/>
</dbReference>
<dbReference type="PANTHER" id="PTHR10093">
    <property type="entry name" value="IRON-SULFUR CLUSTER ASSEMBLY ENZYME NIFU HOMOLOG"/>
    <property type="match status" value="1"/>
</dbReference>
<dbReference type="Pfam" id="PF01592">
    <property type="entry name" value="NifU_N"/>
    <property type="match status" value="1"/>
</dbReference>
<dbReference type="SUPFAM" id="SSF82649">
    <property type="entry name" value="SufE/NifU"/>
    <property type="match status" value="1"/>
</dbReference>
<keyword id="KW-0002">3D-structure</keyword>
<keyword id="KW-1185">Reference proteome</keyword>
<protein>
    <recommendedName>
        <fullName>Iron-sulfur cluster assembly scaffold protein IscU</fullName>
    </recommendedName>
    <alternativeName>
        <fullName>Sulfur acceptor protein IscU</fullName>
    </alternativeName>
</protein>
<feature type="chain" id="PRO_0000166185" description="Iron-sulfur cluster assembly scaffold protein IscU">
    <location>
        <begin position="1"/>
        <end position="128"/>
    </location>
</feature>
<feature type="mutagenesis site" description="No longer binds IscS." evidence="1">
    <location>
        <begin position="1"/>
        <end position="12"/>
    </location>
</feature>
<feature type="mutagenesis site" description="Partial loss of IscS binding." evidence="1">
    <location>
        <begin position="1"/>
        <end position="6"/>
    </location>
</feature>
<feature type="mutagenesis site" description="Binds IscS." evidence="1">
    <original>E</original>
    <variation>L</variation>
    <location>
        <position position="5"/>
    </location>
</feature>
<feature type="mutagenesis site" description="Binds IscS." evidence="1">
    <original>D</original>
    <variation>R</variation>
    <location>
        <position position="9"/>
    </location>
</feature>
<feature type="mutagenesis site" description="Binds IscS." evidence="1">
    <original>Y</original>
    <variation>A</variation>
    <location>
        <position position="11"/>
    </location>
</feature>
<feature type="mutagenesis site" description="Binds IscS." evidence="1">
    <original>E</original>
    <variation>R</variation>
    <location>
        <position position="98"/>
    </location>
</feature>
<feature type="mutagenesis site" description="No longer binds IscS." evidence="1">
    <original>K</original>
    <variation>E</variation>
    <location>
        <position position="103"/>
    </location>
</feature>
<feature type="helix" evidence="4">
    <location>
        <begin position="5"/>
        <end position="12"/>
    </location>
</feature>
<feature type="strand" evidence="4">
    <location>
        <begin position="15"/>
        <end position="18"/>
    </location>
</feature>
<feature type="strand" evidence="4">
    <location>
        <begin position="25"/>
        <end position="33"/>
    </location>
</feature>
<feature type="turn" evidence="4">
    <location>
        <begin position="35"/>
        <end position="37"/>
    </location>
</feature>
<feature type="strand" evidence="4">
    <location>
        <begin position="40"/>
        <end position="47"/>
    </location>
</feature>
<feature type="strand" evidence="4">
    <location>
        <begin position="49"/>
        <end position="51"/>
    </location>
</feature>
<feature type="strand" evidence="4">
    <location>
        <begin position="53"/>
        <end position="62"/>
    </location>
</feature>
<feature type="helix" evidence="4">
    <location>
        <begin position="64"/>
        <end position="77"/>
    </location>
</feature>
<feature type="helix" evidence="4">
    <location>
        <begin position="82"/>
        <end position="86"/>
    </location>
</feature>
<feature type="helix" evidence="4">
    <location>
        <begin position="90"/>
        <end position="97"/>
    </location>
</feature>
<feature type="helix" evidence="4">
    <location>
        <begin position="101"/>
        <end position="104"/>
    </location>
</feature>
<feature type="helix" evidence="4">
    <location>
        <begin position="105"/>
        <end position="123"/>
    </location>
</feature>
<reference key="1">
    <citation type="journal article" date="2001" name="Nature">
        <title>Genome sequence of enterohaemorrhagic Escherichia coli O157:H7.</title>
        <authorList>
            <person name="Perna N.T."/>
            <person name="Plunkett G. III"/>
            <person name="Burland V."/>
            <person name="Mau B."/>
            <person name="Glasner J.D."/>
            <person name="Rose D.J."/>
            <person name="Mayhew G.F."/>
            <person name="Evans P.S."/>
            <person name="Gregor J."/>
            <person name="Kirkpatrick H.A."/>
            <person name="Posfai G."/>
            <person name="Hackett J."/>
            <person name="Klink S."/>
            <person name="Boutin A."/>
            <person name="Shao Y."/>
            <person name="Miller L."/>
            <person name="Grotbeck E.J."/>
            <person name="Davis N.W."/>
            <person name="Lim A."/>
            <person name="Dimalanta E.T."/>
            <person name="Potamousis K."/>
            <person name="Apodaca J."/>
            <person name="Anantharaman T.S."/>
            <person name="Lin J."/>
            <person name="Yen G."/>
            <person name="Schwartz D.C."/>
            <person name="Welch R.A."/>
            <person name="Blattner F.R."/>
        </authorList>
    </citation>
    <scope>NUCLEOTIDE SEQUENCE [LARGE SCALE GENOMIC DNA]</scope>
    <source>
        <strain>O157:H7 / EDL933 / ATCC 700927 / EHEC</strain>
    </source>
</reference>
<reference key="2">
    <citation type="journal article" date="2001" name="DNA Res.">
        <title>Complete genome sequence of enterohemorrhagic Escherichia coli O157:H7 and genomic comparison with a laboratory strain K-12.</title>
        <authorList>
            <person name="Hayashi T."/>
            <person name="Makino K."/>
            <person name="Ohnishi M."/>
            <person name="Kurokawa K."/>
            <person name="Ishii K."/>
            <person name="Yokoyama K."/>
            <person name="Han C.-G."/>
            <person name="Ohtsubo E."/>
            <person name="Nakayama K."/>
            <person name="Murata T."/>
            <person name="Tanaka M."/>
            <person name="Tobe T."/>
            <person name="Iida T."/>
            <person name="Takami H."/>
            <person name="Honda T."/>
            <person name="Sasakawa C."/>
            <person name="Ogasawara N."/>
            <person name="Yasunaga T."/>
            <person name="Kuhara S."/>
            <person name="Shiba T."/>
            <person name="Hattori M."/>
            <person name="Shinagawa H."/>
        </authorList>
    </citation>
    <scope>NUCLEOTIDE SEQUENCE [LARGE SCALE GENOMIC DNA]</scope>
    <source>
        <strain>O157:H7 / Sakai / RIMD 0509952 / EHEC</strain>
    </source>
</reference>
<reference key="3">
    <citation type="journal article" date="2010" name="PLoS Biol.">
        <title>Structural basis for Fe-S cluster assembly and tRNA thiolation mediated by IscS protein-protein interactions.</title>
        <authorList>
            <person name="Shi R."/>
            <person name="Proteau A."/>
            <person name="Villarroya M."/>
            <person name="Moukadiri I."/>
            <person name="Zhang L."/>
            <person name="Trempe J.F."/>
            <person name="Matte A."/>
            <person name="Armengod M.E."/>
            <person name="Cygler M."/>
        </authorList>
    </citation>
    <scope>X-RAY CRYSTALLOGRAPHY (3.00 ANGSTROMS) IN COMPLEX WITH ISCS</scope>
    <scope>FUNCTION</scope>
    <scope>INTERACTION WITH ISCS</scope>
    <scope>SUBUNIT</scope>
    <scope>MUTAGENESIS OF 1-MET--LYS-6; 1-MET--GLU-12; GLU-5; ASP-9; TYR-11; GLU-98 AND LYS-103</scope>
    <source>
        <strain>O157:H7 / EDL933 / ATCC 700927 / EHEC</strain>
    </source>
</reference>
<gene>
    <name type="primary">iscU</name>
    <name type="synonym">nifU</name>
    <name type="ordered locus">Z3796</name>
    <name type="ordered locus">ECs3395</name>
</gene>
<sequence length="128" mass="13849">MAYSEKVIDHYENPRNVGSFDNNDENVGSGMVGAPACGDVMKLQIKVNDEGIIEDARFKTYGCGSAIASSSLVTEWVKGKSLDEAQAIKNTDIAEELELPPVKIHCSILAEDAIKAAIADYKSKREAK</sequence>
<comment type="function">
    <text evidence="3">A scaffold on which IscS assembles Fe-S clusters. Subsequently gives the nascent cluster to other proteins. It is likely that Fe-S cluster coordination is flexible as the role of this complex is to build and then hand off Fe-S clusters (Probable).</text>
</comment>
<comment type="subunit">
    <text evidence="1">Forms a heterotetramer with IscS; each subunit of the IscS dimer contacts an IscU monomer. Certain pairs of proteins can bind simultaneously to IscS; IscS-IscU-CyaY and IscS-IscU-IscX complexes can be isolated in vitro, but others (IscS-IscU-TusA) cannot. IscU can displace TusA from IscS.</text>
</comment>
<comment type="interaction">
    <interactant intactId="EBI-9011202">
        <id>P0ACD6</id>
    </interactant>
    <interactant intactId="EBI-9011195">
        <id>P0A6B9</id>
        <label>iscS</label>
    </interactant>
    <organismsDiffer>false</organismsDiffer>
    <experiments>5</experiments>
</comment>
<comment type="similarity">
    <text evidence="2">Belongs to the NifU family.</text>
</comment>
<accession>P0ACD6</accession>
<accession>P77310</accession>
<organism>
    <name type="scientific">Escherichia coli O157:H7</name>
    <dbReference type="NCBI Taxonomy" id="83334"/>
    <lineage>
        <taxon>Bacteria</taxon>
        <taxon>Pseudomonadati</taxon>
        <taxon>Pseudomonadota</taxon>
        <taxon>Gammaproteobacteria</taxon>
        <taxon>Enterobacterales</taxon>
        <taxon>Enterobacteriaceae</taxon>
        <taxon>Escherichia</taxon>
    </lineage>
</organism>
<name>ISCU_ECO57</name>
<evidence type="ECO:0000269" key="1">
    <source>
    </source>
</evidence>
<evidence type="ECO:0000305" key="2"/>
<evidence type="ECO:0000305" key="3">
    <source>
    </source>
</evidence>
<evidence type="ECO:0007829" key="4">
    <source>
        <dbReference type="PDB" id="3LVL"/>
    </source>
</evidence>
<proteinExistence type="evidence at protein level"/>